<protein>
    <recommendedName>
        <fullName evidence="1">RNA chaperone ProQ</fullName>
    </recommendedName>
</protein>
<gene>
    <name evidence="1" type="primary">proQ</name>
    <name type="ordered locus">SeAg_B1285</name>
</gene>
<sequence>MENQPKLNSSKEVIAFLAERFPHCFSAEGEARPLKIGIFQDLVERVGGEMNLSKTQLRSALRLYTSSWRYLYGVKPGATRVDLDGNPCGELEEQHVEHARKQLEEAKARVQAQRAEQQAKKREAAAAAGEKEDAPRRERKPRPVARRKEGAERKPRADKPTTKAPRAPREEKHTPVSDISVLTVGQSLKVKAGNNAMDATVLEITKDGVRVQLNSGMSLIVRAEHLVF</sequence>
<keyword id="KW-0143">Chaperone</keyword>
<keyword id="KW-0963">Cytoplasm</keyword>
<keyword id="KW-0694">RNA-binding</keyword>
<comment type="function">
    <text evidence="1">RNA chaperone with significant RNA binding, RNA strand exchange and RNA duplexing activities. May regulate ProP activity through an RNA-based, post-transcriptional mechanism.</text>
</comment>
<comment type="subcellular location">
    <subcellularLocation>
        <location evidence="1">Cytoplasm</location>
    </subcellularLocation>
</comment>
<comment type="similarity">
    <text evidence="1">Belongs to the ProQ family.</text>
</comment>
<dbReference type="EMBL" id="CP001138">
    <property type="protein sequence ID" value="ACH52579.1"/>
    <property type="molecule type" value="Genomic_DNA"/>
</dbReference>
<dbReference type="RefSeq" id="WP_000431401.1">
    <property type="nucleotide sequence ID" value="NC_011149.1"/>
</dbReference>
<dbReference type="SMR" id="B5F3P7"/>
<dbReference type="KEGG" id="sea:SeAg_B1285"/>
<dbReference type="HOGENOM" id="CLU_113254_0_0_6"/>
<dbReference type="Proteomes" id="UP000008819">
    <property type="component" value="Chromosome"/>
</dbReference>
<dbReference type="GO" id="GO:0005829">
    <property type="term" value="C:cytosol"/>
    <property type="evidence" value="ECO:0007669"/>
    <property type="project" value="TreeGrafter"/>
</dbReference>
<dbReference type="GO" id="GO:0033592">
    <property type="term" value="F:RNA strand annealing activity"/>
    <property type="evidence" value="ECO:0007669"/>
    <property type="project" value="UniProtKB-UniRule"/>
</dbReference>
<dbReference type="GO" id="GO:0034057">
    <property type="term" value="F:RNA strand-exchange activity"/>
    <property type="evidence" value="ECO:0007669"/>
    <property type="project" value="UniProtKB-UniRule"/>
</dbReference>
<dbReference type="GO" id="GO:0010608">
    <property type="term" value="P:post-transcriptional regulation of gene expression"/>
    <property type="evidence" value="ECO:0007669"/>
    <property type="project" value="InterPro"/>
</dbReference>
<dbReference type="FunFam" id="1.10.1710.10:FF:000001">
    <property type="entry name" value="RNA chaperone ProQ"/>
    <property type="match status" value="1"/>
</dbReference>
<dbReference type="Gene3D" id="1.10.1710.10">
    <property type="entry name" value="ProQ/FinO domain"/>
    <property type="match status" value="1"/>
</dbReference>
<dbReference type="HAMAP" id="MF_00749">
    <property type="entry name" value="ProQ"/>
    <property type="match status" value="1"/>
</dbReference>
<dbReference type="InterPro" id="IPR023529">
    <property type="entry name" value="ProQ"/>
</dbReference>
<dbReference type="InterPro" id="IPR016103">
    <property type="entry name" value="ProQ/FinO"/>
</dbReference>
<dbReference type="InterPro" id="IPR036442">
    <property type="entry name" value="ProQ/FinO_sf"/>
</dbReference>
<dbReference type="InterPro" id="IPR035236">
    <property type="entry name" value="ProQ_C"/>
</dbReference>
<dbReference type="NCBIfam" id="NF003434">
    <property type="entry name" value="PRK04950.1"/>
    <property type="match status" value="1"/>
</dbReference>
<dbReference type="PANTHER" id="PTHR38106">
    <property type="entry name" value="RNA CHAPERONE PROQ"/>
    <property type="match status" value="1"/>
</dbReference>
<dbReference type="PANTHER" id="PTHR38106:SF1">
    <property type="entry name" value="RNA CHAPERONE PROQ"/>
    <property type="match status" value="1"/>
</dbReference>
<dbReference type="Pfam" id="PF04352">
    <property type="entry name" value="ProQ"/>
    <property type="match status" value="1"/>
</dbReference>
<dbReference type="Pfam" id="PF17516">
    <property type="entry name" value="ProQ_C"/>
    <property type="match status" value="1"/>
</dbReference>
<dbReference type="SMART" id="SM00945">
    <property type="entry name" value="ProQ"/>
    <property type="match status" value="1"/>
</dbReference>
<dbReference type="SUPFAM" id="SSF48657">
    <property type="entry name" value="FinO-like"/>
    <property type="match status" value="1"/>
</dbReference>
<organism>
    <name type="scientific">Salmonella agona (strain SL483)</name>
    <dbReference type="NCBI Taxonomy" id="454166"/>
    <lineage>
        <taxon>Bacteria</taxon>
        <taxon>Pseudomonadati</taxon>
        <taxon>Pseudomonadota</taxon>
        <taxon>Gammaproteobacteria</taxon>
        <taxon>Enterobacterales</taxon>
        <taxon>Enterobacteriaceae</taxon>
        <taxon>Salmonella</taxon>
    </lineage>
</organism>
<name>PROQ_SALA4</name>
<feature type="chain" id="PRO_1000133301" description="RNA chaperone ProQ">
    <location>
        <begin position="1"/>
        <end position="228"/>
    </location>
</feature>
<feature type="region of interest" description="Disordered" evidence="2">
    <location>
        <begin position="107"/>
        <end position="178"/>
    </location>
</feature>
<feature type="compositionally biased region" description="Basic and acidic residues" evidence="2">
    <location>
        <begin position="117"/>
        <end position="136"/>
    </location>
</feature>
<feature type="compositionally biased region" description="Basic and acidic residues" evidence="2">
    <location>
        <begin position="146"/>
        <end position="175"/>
    </location>
</feature>
<reference key="1">
    <citation type="journal article" date="2011" name="J. Bacteriol.">
        <title>Comparative genomics of 28 Salmonella enterica isolates: evidence for CRISPR-mediated adaptive sublineage evolution.</title>
        <authorList>
            <person name="Fricke W.F."/>
            <person name="Mammel M.K."/>
            <person name="McDermott P.F."/>
            <person name="Tartera C."/>
            <person name="White D.G."/>
            <person name="Leclerc J.E."/>
            <person name="Ravel J."/>
            <person name="Cebula T.A."/>
        </authorList>
    </citation>
    <scope>NUCLEOTIDE SEQUENCE [LARGE SCALE GENOMIC DNA]</scope>
    <source>
        <strain>SL483</strain>
    </source>
</reference>
<proteinExistence type="inferred from homology"/>
<accession>B5F3P7</accession>
<evidence type="ECO:0000255" key="1">
    <source>
        <dbReference type="HAMAP-Rule" id="MF_00749"/>
    </source>
</evidence>
<evidence type="ECO:0000256" key="2">
    <source>
        <dbReference type="SAM" id="MobiDB-lite"/>
    </source>
</evidence>